<reference key="1">
    <citation type="journal article" date="2009" name="PLoS Genet.">
        <title>Organised genome dynamics in the Escherichia coli species results in highly diverse adaptive paths.</title>
        <authorList>
            <person name="Touchon M."/>
            <person name="Hoede C."/>
            <person name="Tenaillon O."/>
            <person name="Barbe V."/>
            <person name="Baeriswyl S."/>
            <person name="Bidet P."/>
            <person name="Bingen E."/>
            <person name="Bonacorsi S."/>
            <person name="Bouchier C."/>
            <person name="Bouvet O."/>
            <person name="Calteau A."/>
            <person name="Chiapello H."/>
            <person name="Clermont O."/>
            <person name="Cruveiller S."/>
            <person name="Danchin A."/>
            <person name="Diard M."/>
            <person name="Dossat C."/>
            <person name="Karoui M.E."/>
            <person name="Frapy E."/>
            <person name="Garry L."/>
            <person name="Ghigo J.M."/>
            <person name="Gilles A.M."/>
            <person name="Johnson J."/>
            <person name="Le Bouguenec C."/>
            <person name="Lescat M."/>
            <person name="Mangenot S."/>
            <person name="Martinez-Jehanne V."/>
            <person name="Matic I."/>
            <person name="Nassif X."/>
            <person name="Oztas S."/>
            <person name="Petit M.A."/>
            <person name="Pichon C."/>
            <person name="Rouy Z."/>
            <person name="Ruf C.S."/>
            <person name="Schneider D."/>
            <person name="Tourret J."/>
            <person name="Vacherie B."/>
            <person name="Vallenet D."/>
            <person name="Medigue C."/>
            <person name="Rocha E.P.C."/>
            <person name="Denamur E."/>
        </authorList>
    </citation>
    <scope>NUCLEOTIDE SEQUENCE [LARGE SCALE GENOMIC DNA]</scope>
    <source>
        <strain>ATCC 35469 / DSM 13698 / BCRC 15582 / CCUG 18766 / IAM 14443 / JCM 21226 / LMG 7866 / NBRC 102419 / NCTC 12128 / CDC 0568-73</strain>
    </source>
</reference>
<protein>
    <recommendedName>
        <fullName evidence="1">Large ribosomal subunit protein uL10</fullName>
    </recommendedName>
    <alternativeName>
        <fullName evidence="2">50S ribosomal protein L10</fullName>
    </alternativeName>
</protein>
<comment type="function">
    <text evidence="1">Forms part of the ribosomal stalk, playing a central role in the interaction of the ribosome with GTP-bound translation factors.</text>
</comment>
<comment type="subunit">
    <text evidence="1">Part of the ribosomal stalk of the 50S ribosomal subunit. The N-terminus interacts with L11 and the large rRNA to form the base of the stalk. The C-terminus forms an elongated spine to which L12 dimers bind in a sequential fashion forming a multimeric L10(L12)X complex.</text>
</comment>
<comment type="similarity">
    <text evidence="1">Belongs to the universal ribosomal protein uL10 family.</text>
</comment>
<accession>B7LUL7</accession>
<proteinExistence type="inferred from homology"/>
<gene>
    <name evidence="1" type="primary">rplJ</name>
    <name type="ordered locus">EFER_3769</name>
</gene>
<organism>
    <name type="scientific">Escherichia fergusonii (strain ATCC 35469 / DSM 13698 / CCUG 18766 / IAM 14443 / JCM 21226 / LMG 7866 / NBRC 102419 / NCTC 12128 / CDC 0568-73)</name>
    <dbReference type="NCBI Taxonomy" id="585054"/>
    <lineage>
        <taxon>Bacteria</taxon>
        <taxon>Pseudomonadati</taxon>
        <taxon>Pseudomonadota</taxon>
        <taxon>Gammaproteobacteria</taxon>
        <taxon>Enterobacterales</taxon>
        <taxon>Enterobacteriaceae</taxon>
        <taxon>Escherichia</taxon>
    </lineage>
</organism>
<evidence type="ECO:0000255" key="1">
    <source>
        <dbReference type="HAMAP-Rule" id="MF_00362"/>
    </source>
</evidence>
<evidence type="ECO:0000305" key="2"/>
<feature type="chain" id="PRO_1000120962" description="Large ribosomal subunit protein uL10">
    <location>
        <begin position="1"/>
        <end position="165"/>
    </location>
</feature>
<feature type="modified residue" description="N6-acetyllysine" evidence="1">
    <location>
        <position position="37"/>
    </location>
</feature>
<feature type="modified residue" description="N6-acetyllysine" evidence="1">
    <location>
        <position position="105"/>
    </location>
</feature>
<dbReference type="EMBL" id="CU928158">
    <property type="protein sequence ID" value="CAQ91220.1"/>
    <property type="molecule type" value="Genomic_DNA"/>
</dbReference>
<dbReference type="RefSeq" id="WP_001207201.1">
    <property type="nucleotide sequence ID" value="NC_011740.1"/>
</dbReference>
<dbReference type="SMR" id="B7LUL7"/>
<dbReference type="GeneID" id="93777909"/>
<dbReference type="KEGG" id="efe:EFER_3769"/>
<dbReference type="HOGENOM" id="CLU_092227_0_2_6"/>
<dbReference type="OrthoDB" id="9808307at2"/>
<dbReference type="Proteomes" id="UP000000745">
    <property type="component" value="Chromosome"/>
</dbReference>
<dbReference type="GO" id="GO:0015934">
    <property type="term" value="C:large ribosomal subunit"/>
    <property type="evidence" value="ECO:0007669"/>
    <property type="project" value="InterPro"/>
</dbReference>
<dbReference type="GO" id="GO:0070180">
    <property type="term" value="F:large ribosomal subunit rRNA binding"/>
    <property type="evidence" value="ECO:0007669"/>
    <property type="project" value="UniProtKB-UniRule"/>
</dbReference>
<dbReference type="GO" id="GO:0003735">
    <property type="term" value="F:structural constituent of ribosome"/>
    <property type="evidence" value="ECO:0007669"/>
    <property type="project" value="InterPro"/>
</dbReference>
<dbReference type="GO" id="GO:0006412">
    <property type="term" value="P:translation"/>
    <property type="evidence" value="ECO:0007669"/>
    <property type="project" value="UniProtKB-UniRule"/>
</dbReference>
<dbReference type="CDD" id="cd05797">
    <property type="entry name" value="Ribosomal_L10"/>
    <property type="match status" value="1"/>
</dbReference>
<dbReference type="FunFam" id="3.30.70.1730:FF:000001">
    <property type="entry name" value="50S ribosomal protein L10"/>
    <property type="match status" value="1"/>
</dbReference>
<dbReference type="Gene3D" id="3.30.70.1730">
    <property type="match status" value="1"/>
</dbReference>
<dbReference type="Gene3D" id="6.10.250.2350">
    <property type="match status" value="1"/>
</dbReference>
<dbReference type="HAMAP" id="MF_00362">
    <property type="entry name" value="Ribosomal_uL10"/>
    <property type="match status" value="1"/>
</dbReference>
<dbReference type="InterPro" id="IPR001790">
    <property type="entry name" value="Ribosomal_uL10"/>
</dbReference>
<dbReference type="InterPro" id="IPR043141">
    <property type="entry name" value="Ribosomal_uL10-like_sf"/>
</dbReference>
<dbReference type="InterPro" id="IPR022973">
    <property type="entry name" value="Ribosomal_uL10_bac"/>
</dbReference>
<dbReference type="InterPro" id="IPR047865">
    <property type="entry name" value="Ribosomal_uL10_bac_type"/>
</dbReference>
<dbReference type="InterPro" id="IPR002363">
    <property type="entry name" value="Ribosomal_uL10_CS_bac"/>
</dbReference>
<dbReference type="NCBIfam" id="NF000955">
    <property type="entry name" value="PRK00099.1-1"/>
    <property type="match status" value="1"/>
</dbReference>
<dbReference type="PANTHER" id="PTHR11560">
    <property type="entry name" value="39S RIBOSOMAL PROTEIN L10, MITOCHONDRIAL"/>
    <property type="match status" value="1"/>
</dbReference>
<dbReference type="Pfam" id="PF00466">
    <property type="entry name" value="Ribosomal_L10"/>
    <property type="match status" value="1"/>
</dbReference>
<dbReference type="SUPFAM" id="SSF160369">
    <property type="entry name" value="Ribosomal protein L10-like"/>
    <property type="match status" value="1"/>
</dbReference>
<dbReference type="PROSITE" id="PS01109">
    <property type="entry name" value="RIBOSOMAL_L10"/>
    <property type="match status" value="1"/>
</dbReference>
<name>RL10_ESCF3</name>
<keyword id="KW-0007">Acetylation</keyword>
<keyword id="KW-0687">Ribonucleoprotein</keyword>
<keyword id="KW-0689">Ribosomal protein</keyword>
<keyword id="KW-0694">RNA-binding</keyword>
<keyword id="KW-0699">rRNA-binding</keyword>
<sequence length="165" mass="17712">MALNLQDKQAIVAEVSEVAKGALSAVVADSRGVTVDKMTELRKAGREAGVYMRVVRNTLLRRAVEGTPFECLKDAFVGPTLIAYSMEHPGAAARLFKEFAKANAKFEVKAAAFEGELIPASQIDRLATLPTYEEAIARLMATMKEASAGKLVRTLAAVRDAKEAA</sequence>